<comment type="function">
    <text evidence="2">Plays an essential role in the inhibition of host immune response. Prevents the establishment of cellular antiviral state by blocking interferon-alpha/beta (IFN-alpha/beta) production and signaling pathway. Interacts with host IFIH1/MDA5 and DHX58/LGP2 to inhibit the transduction pathway involved in the activation of IFN-beta promoter, thus protecting the virus against cell antiviral state. Efficiently blocks type I IFN signaling following infection by targeting host STAT2 for proteasomal degradation. Also plays a role in viral growth by promoting host RhoA-induced F-actin formation.</text>
</comment>
<comment type="subunit">
    <text evidence="2">Interacts with host IFIH1/MDA5 and DHX58/LGP2. Forms with host DDB1, CUL4A, STAT1 and STAT2 the HPIV2 virus V-dependent complex (VDC); this complex targets host STAT2 to proteasomal degradation.</text>
</comment>
<comment type="subcellular location">
    <subcellularLocation>
        <location evidence="2">Host nucleus</location>
    </subcellularLocation>
</comment>
<comment type="RNA editing">
    <location>
        <position position="164" evidence="4"/>
    </location>
    <text>Partially edited. RNA editing at this position consists of an insertion of two guanine nucleotides. The sequence displayed here is the V protein, derived from the unedited RNA. The edited RNA gives rise to the P protein (AC P23056).</text>
</comment>
<comment type="similarity">
    <text evidence="5">Belongs to the paramyxoviruses V protein family.</text>
</comment>
<sequence length="225" mass="24151">MAEEPTYTTEQVDELIHAGLGTVDFFLSRPIDAQSSLGKGSIPPGVTAVLTSAAETKSKPVAAGPVKPRRKKVISNTTPYTIADNIPPEKLPINTPIPNPLLPLARPHGKMTDIDIVTGNITEGSYKGVELAKLGKQTLLTRFTSNEPVSSAGSAQDPNFKRGGANRERARGNHRREWSIAWVGDQVKVFEWCNPRCAPVTASARKFTCTCGSCPSICGECEGDH</sequence>
<reference key="1">
    <citation type="journal article" date="1990" name="Virology">
        <title>Sequence analysis of P gene of human parainfluenza type 2 virus: P and cysteine-rich proteins are translated by two mRNAs that differ by two nontemplated G residues.</title>
        <authorList>
            <person name="Ohgimoto S."/>
            <person name="Bando H."/>
            <person name="Kawano M."/>
            <person name="Okamoto K."/>
            <person name="Kondo K."/>
            <person name="Tsurudome M."/>
            <person name="Nishio M."/>
            <person name="Ito Y."/>
        </authorList>
    </citation>
    <scope>NUCLEOTIDE SEQUENCE [GENOMIC RNA]</scope>
    <scope>RNA EDITING</scope>
</reference>
<gene>
    <name type="primary">P/V</name>
</gene>
<organismHost>
    <name type="scientific">Homo sapiens</name>
    <name type="common">Human</name>
    <dbReference type="NCBI Taxonomy" id="9606"/>
</organismHost>
<name>V_PI2HT</name>
<protein>
    <recommendedName>
        <fullName>Non-structural protein V</fullName>
    </recommendedName>
</protein>
<dbReference type="EMBL" id="M37751">
    <property type="protein sequence ID" value="AAA46803.1"/>
    <property type="molecule type" value="Genomic_RNA"/>
</dbReference>
<dbReference type="EMBL" id="X57559">
    <property type="protein sequence ID" value="CAA40784.1"/>
    <property type="molecule type" value="Genomic_DNA"/>
</dbReference>
<dbReference type="PIR" id="A35313">
    <property type="entry name" value="MNNZVT"/>
</dbReference>
<dbReference type="SMR" id="P23057"/>
<dbReference type="IntAct" id="P23057">
    <property type="interactions" value="12"/>
</dbReference>
<dbReference type="Proteomes" id="UP000000472">
    <property type="component" value="Segment"/>
</dbReference>
<dbReference type="GO" id="GO:0042025">
    <property type="term" value="C:host cell nucleus"/>
    <property type="evidence" value="ECO:0007669"/>
    <property type="project" value="UniProtKB-SubCell"/>
</dbReference>
<dbReference type="GO" id="GO:0046872">
    <property type="term" value="F:metal ion binding"/>
    <property type="evidence" value="ECO:0007669"/>
    <property type="project" value="UniProtKB-KW"/>
</dbReference>
<dbReference type="GO" id="GO:0039554">
    <property type="term" value="P:symbiont-mediated suppression of host cytoplasmic pattern recognition receptor signaling pathway via inhibition of MDA-5 activity"/>
    <property type="evidence" value="ECO:0007669"/>
    <property type="project" value="UniProtKB-KW"/>
</dbReference>
<dbReference type="GO" id="GO:0039564">
    <property type="term" value="P:symbiont-mediated suppression of host JAK-STAT cascade via inhibition of STAT2 activity"/>
    <property type="evidence" value="ECO:0007669"/>
    <property type="project" value="UniProtKB-KW"/>
</dbReference>
<dbReference type="GO" id="GO:0039502">
    <property type="term" value="P:symbiont-mediated suppression of host type I interferon-mediated signaling pathway"/>
    <property type="evidence" value="ECO:0007669"/>
    <property type="project" value="UniProtKB-KW"/>
</dbReference>
<dbReference type="Gene3D" id="4.10.80.340">
    <property type="match status" value="1"/>
</dbReference>
<dbReference type="InterPro" id="IPR024279">
    <property type="entry name" value="Paramyx_V_Zn-bd"/>
</dbReference>
<dbReference type="InterPro" id="IPR025909">
    <property type="entry name" value="Soyouz_module"/>
</dbReference>
<dbReference type="Pfam" id="PF14313">
    <property type="entry name" value="Soyouz_module"/>
    <property type="match status" value="1"/>
</dbReference>
<dbReference type="Pfam" id="PF13008">
    <property type="entry name" value="zf-Paramyx-P"/>
    <property type="match status" value="1"/>
</dbReference>
<feature type="chain" id="PRO_0000142816" description="Non-structural protein V">
    <location>
        <begin position="1"/>
        <end position="225"/>
    </location>
</feature>
<feature type="region of interest" description="Disordered" evidence="3">
    <location>
        <begin position="145"/>
        <end position="173"/>
    </location>
</feature>
<feature type="compositionally biased region" description="Polar residues" evidence="3">
    <location>
        <begin position="145"/>
        <end position="157"/>
    </location>
</feature>
<feature type="binding site" evidence="1">
    <location>
        <position position="174"/>
    </location>
    <ligand>
        <name>Zn(2+)</name>
        <dbReference type="ChEBI" id="CHEBI:29105"/>
        <label>1</label>
    </ligand>
</feature>
<feature type="binding site" evidence="1">
    <location>
        <position position="193"/>
    </location>
    <ligand>
        <name>Zn(2+)</name>
        <dbReference type="ChEBI" id="CHEBI:29105"/>
        <label>1</label>
    </ligand>
</feature>
<feature type="binding site" evidence="1">
    <location>
        <position position="197"/>
    </location>
    <ligand>
        <name>Zn(2+)</name>
        <dbReference type="ChEBI" id="CHEBI:29105"/>
        <label>2</label>
    </ligand>
</feature>
<feature type="binding site" evidence="1">
    <location>
        <position position="209"/>
    </location>
    <ligand>
        <name>Zn(2+)</name>
        <dbReference type="ChEBI" id="CHEBI:29105"/>
        <label>2</label>
    </ligand>
</feature>
<feature type="binding site" evidence="1">
    <location>
        <position position="211"/>
    </location>
    <ligand>
        <name>Zn(2+)</name>
        <dbReference type="ChEBI" id="CHEBI:29105"/>
        <label>2</label>
    </ligand>
</feature>
<feature type="binding site" evidence="1">
    <location>
        <position position="214"/>
    </location>
    <ligand>
        <name>Zn(2+)</name>
        <dbReference type="ChEBI" id="CHEBI:29105"/>
        <label>2</label>
    </ligand>
</feature>
<feature type="binding site" evidence="1">
    <location>
        <position position="218"/>
    </location>
    <ligand>
        <name>Zn(2+)</name>
        <dbReference type="ChEBI" id="CHEBI:29105"/>
        <label>1</label>
    </ligand>
</feature>
<feature type="binding site" evidence="1">
    <location>
        <position position="221"/>
    </location>
    <ligand>
        <name>Zn(2+)</name>
        <dbReference type="ChEBI" id="CHEBI:29105"/>
        <label>1</label>
    </ligand>
</feature>
<evidence type="ECO:0000250" key="1"/>
<evidence type="ECO:0000250" key="2">
    <source>
        <dbReference type="UniProtKB" id="P19847"/>
    </source>
</evidence>
<evidence type="ECO:0000256" key="3">
    <source>
        <dbReference type="SAM" id="MobiDB-lite"/>
    </source>
</evidence>
<evidence type="ECO:0000269" key="4">
    <source>
    </source>
</evidence>
<evidence type="ECO:0000305" key="5"/>
<accession>P23057</accession>
<keyword id="KW-1048">Host nucleus</keyword>
<keyword id="KW-0945">Host-virus interaction</keyword>
<keyword id="KW-1090">Inhibition of host innate immune response by virus</keyword>
<keyword id="KW-1114">Inhibition of host interferon signaling pathway by virus</keyword>
<keyword id="KW-1089">Inhibition of host MDA5 by virus</keyword>
<keyword id="KW-1113">Inhibition of host RLR pathway by virus</keyword>
<keyword id="KW-1106">Inhibition of host STAT2 by virus</keyword>
<keyword id="KW-0922">Interferon antiviral system evasion</keyword>
<keyword id="KW-0479">Metal-binding</keyword>
<keyword id="KW-1185">Reference proteome</keyword>
<keyword id="KW-0691">RNA editing</keyword>
<keyword id="KW-0899">Viral immunoevasion</keyword>
<keyword id="KW-0862">Zinc</keyword>
<proteinExistence type="inferred from homology"/>
<organism>
    <name type="scientific">Human parainfluenza 2 virus (strain Toshiba)</name>
    <name type="common">HPIV-2</name>
    <dbReference type="NCBI Taxonomy" id="11214"/>
    <lineage>
        <taxon>Viruses</taxon>
        <taxon>Riboviria</taxon>
        <taxon>Orthornavirae</taxon>
        <taxon>Negarnaviricota</taxon>
        <taxon>Haploviricotina</taxon>
        <taxon>Monjiviricetes</taxon>
        <taxon>Mononegavirales</taxon>
        <taxon>Paramyxoviridae</taxon>
        <taxon>Rubulavirinae</taxon>
        <taxon>Orthorubulavirus</taxon>
        <taxon>Orthorubulavirus laryngotracheitidis</taxon>
        <taxon>Human parainfluenza 2 virus</taxon>
    </lineage>
</organism>